<evidence type="ECO:0000255" key="1"/>
<evidence type="ECO:0000255" key="2">
    <source>
        <dbReference type="PROSITE-ProRule" id="PRU00159"/>
    </source>
</evidence>
<evidence type="ECO:0000255" key="3">
    <source>
        <dbReference type="PROSITE-ProRule" id="PRU10027"/>
    </source>
</evidence>
<evidence type="ECO:0000256" key="4">
    <source>
        <dbReference type="SAM" id="MobiDB-lite"/>
    </source>
</evidence>
<evidence type="ECO:0000269" key="5">
    <source>
    </source>
</evidence>
<evidence type="ECO:0000269" key="6">
    <source>
    </source>
</evidence>
<evidence type="ECO:0000269" key="7">
    <source>
    </source>
</evidence>
<evidence type="ECO:0000269" key="8">
    <source>
    </source>
</evidence>
<evidence type="ECO:0000269" key="9">
    <source>
    </source>
</evidence>
<evidence type="ECO:0000269" key="10">
    <source>
    </source>
</evidence>
<evidence type="ECO:0000269" key="11">
    <source>
    </source>
</evidence>
<evidence type="ECO:0000269" key="12">
    <source>
    </source>
</evidence>
<evidence type="ECO:0000269" key="13">
    <source>
    </source>
</evidence>
<evidence type="ECO:0000269" key="14">
    <source>
    </source>
</evidence>
<evidence type="ECO:0000303" key="15">
    <source>
    </source>
</evidence>
<evidence type="ECO:0000303" key="16">
    <source>
    </source>
</evidence>
<evidence type="ECO:0000305" key="17"/>
<evidence type="ECO:0000305" key="18">
    <source>
    </source>
</evidence>
<evidence type="ECO:0000312" key="19">
    <source>
        <dbReference type="Araport" id="AT3G51550"/>
    </source>
</evidence>
<evidence type="ECO:0000312" key="20">
    <source>
        <dbReference type="EMBL" id="CAB63019.1"/>
    </source>
</evidence>
<evidence type="ECO:0007744" key="21">
    <source>
    </source>
</evidence>
<evidence type="ECO:0007829" key="22">
    <source>
        <dbReference type="PDB" id="6A5B"/>
    </source>
</evidence>
<evidence type="ECO:0007829" key="23">
    <source>
        <dbReference type="PDB" id="6A5E"/>
    </source>
</evidence>
<evidence type="ECO:0007829" key="24">
    <source>
        <dbReference type="PDB" id="7XDV"/>
    </source>
</evidence>
<evidence type="ECO:0007829" key="25">
    <source>
        <dbReference type="PDB" id="7XDW"/>
    </source>
</evidence>
<accession>Q9SCZ4</accession>
<accession>A7U523</accession>
<accession>Q0WM33</accession>
<accession>Q94C93</accession>
<accession>Q9M4G2</accession>
<feature type="signal peptide" evidence="1">
    <location>
        <begin position="1"/>
        <end position="27"/>
    </location>
</feature>
<feature type="chain" id="PRO_0000386556" description="Receptor-like protein kinase FERONIA">
    <location>
        <begin position="28"/>
        <end position="895"/>
    </location>
</feature>
<feature type="topological domain" description="Extracellular" evidence="1">
    <location>
        <begin position="28"/>
        <end position="447"/>
    </location>
</feature>
<feature type="transmembrane region" description="Helical" evidence="1">
    <location>
        <begin position="448"/>
        <end position="468"/>
    </location>
</feature>
<feature type="topological domain" description="Cytoplasmic" evidence="1">
    <location>
        <begin position="469"/>
        <end position="895"/>
    </location>
</feature>
<feature type="domain" description="Protein kinase" evidence="2">
    <location>
        <begin position="536"/>
        <end position="810"/>
    </location>
</feature>
<feature type="region of interest" description="Disordered" evidence="4">
    <location>
        <begin position="844"/>
        <end position="895"/>
    </location>
</feature>
<feature type="compositionally biased region" description="Polar residues" evidence="4">
    <location>
        <begin position="884"/>
        <end position="895"/>
    </location>
</feature>
<feature type="active site" description="Proton acceptor" evidence="2 3">
    <location>
        <position position="661"/>
    </location>
</feature>
<feature type="binding site" evidence="2">
    <location>
        <begin position="542"/>
        <end position="550"/>
    </location>
    <ligand>
        <name>ATP</name>
        <dbReference type="ChEBI" id="CHEBI:30616"/>
    </ligand>
</feature>
<feature type="binding site" evidence="2">
    <location>
        <position position="565"/>
    </location>
    <ligand>
        <name>ATP</name>
        <dbReference type="ChEBI" id="CHEBI:30616"/>
    </ligand>
</feature>
<feature type="modified residue" description="Phosphoserine" evidence="12">
    <location>
        <position position="858"/>
    </location>
</feature>
<feature type="modified residue" description="Phosphoserine" evidence="21">
    <location>
        <position position="866"/>
    </location>
</feature>
<feature type="modified residue" description="Phosphoserine" evidence="12">
    <location>
        <position position="871"/>
    </location>
</feature>
<feature type="modified residue" description="Phosphoserine" evidence="12">
    <location>
        <position position="874"/>
    </location>
</feature>
<feature type="glycosylation site" description="N-linked (GlcNAc...) asparagine" evidence="1">
    <location>
        <position position="46"/>
    </location>
</feature>
<feature type="glycosylation site" description="N-linked (GlcNAc...) asparagine" evidence="1">
    <location>
        <position position="124"/>
    </location>
</feature>
<feature type="glycosylation site" description="N-linked (GlcNAc...) asparagine" evidence="1">
    <location>
        <position position="142"/>
    </location>
</feature>
<feature type="glycosylation site" description="N-linked (GlcNAc...) asparagine" evidence="1">
    <location>
        <position position="171"/>
    </location>
</feature>
<feature type="glycosylation site" description="N-linked (GlcNAc...) asparagine" evidence="1">
    <location>
        <position position="219"/>
    </location>
</feature>
<feature type="glycosylation site" description="N-linked (GlcNAc...) asparagine" evidence="1">
    <location>
        <position position="269"/>
    </location>
</feature>
<feature type="glycosylation site" description="N-linked (GlcNAc...) asparagine" evidence="1">
    <location>
        <position position="305"/>
    </location>
</feature>
<feature type="glycosylation site" description="N-linked (GlcNAc...) asparagine" evidence="1">
    <location>
        <position position="330"/>
    </location>
</feature>
<feature type="glycosylation site" description="N-linked (GlcNAc...) asparagine" evidence="1">
    <location>
        <position position="345"/>
    </location>
</feature>
<feature type="glycosylation site" description="N-linked (GlcNAc...) asparagine" evidence="1">
    <location>
        <position position="410"/>
    </location>
</feature>
<feature type="mutagenesis site" description="Loss of kinase activity." evidence="6">
    <original>K</original>
    <variation>R</variation>
    <location>
        <position position="565"/>
    </location>
</feature>
<feature type="sequence conflict" description="In Ref. 1; ABT18100." evidence="17" ref="1">
    <original>R</original>
    <variation>Q</variation>
    <location>
        <position position="7"/>
    </location>
</feature>
<feature type="sequence conflict" description="In Ref. 1; ABT18100." evidence="17" ref="1">
    <location>
        <begin position="17"/>
        <end position="18"/>
    </location>
</feature>
<feature type="sequence conflict" description="In Ref. 1; ABT18100." evidence="17" ref="1">
    <original>A</original>
    <variation>S</variation>
    <location>
        <position position="179"/>
    </location>
</feature>
<feature type="sequence conflict" description="In Ref. 4; AAK59558." evidence="17" ref="4">
    <original>G</original>
    <variation>V</variation>
    <location>
        <position position="546"/>
    </location>
</feature>
<feature type="sequence conflict" description="In Ref. 6; BAF01824." evidence="17" ref="6">
    <original>M</original>
    <variation>V</variation>
    <location>
        <position position="761"/>
    </location>
</feature>
<feature type="strand" evidence="22">
    <location>
        <begin position="35"/>
        <end position="39"/>
    </location>
</feature>
<feature type="strand" evidence="22">
    <location>
        <begin position="54"/>
        <end position="57"/>
    </location>
</feature>
<feature type="strand" evidence="22">
    <location>
        <begin position="72"/>
        <end position="75"/>
    </location>
</feature>
<feature type="turn" evidence="22">
    <location>
        <begin position="86"/>
        <end position="89"/>
    </location>
</feature>
<feature type="strand" evidence="22">
    <location>
        <begin position="90"/>
        <end position="96"/>
    </location>
</feature>
<feature type="strand" evidence="22">
    <location>
        <begin position="98"/>
        <end position="103"/>
    </location>
</feature>
<feature type="strand" evidence="22">
    <location>
        <begin position="106"/>
        <end position="115"/>
    </location>
</feature>
<feature type="helix" evidence="22">
    <location>
        <begin position="125"/>
        <end position="127"/>
    </location>
</feature>
<feature type="strand" evidence="22">
    <location>
        <begin position="130"/>
        <end position="134"/>
    </location>
</feature>
<feature type="strand" evidence="22">
    <location>
        <begin position="137"/>
        <end position="143"/>
    </location>
</feature>
<feature type="helix" evidence="22">
    <location>
        <begin position="145"/>
        <end position="152"/>
    </location>
</feature>
<feature type="strand" evidence="22">
    <location>
        <begin position="155"/>
        <end position="165"/>
    </location>
</feature>
<feature type="strand" evidence="22">
    <location>
        <begin position="167"/>
        <end position="176"/>
    </location>
</feature>
<feature type="strand" evidence="22">
    <location>
        <begin position="178"/>
        <end position="180"/>
    </location>
</feature>
<feature type="strand" evidence="22">
    <location>
        <begin position="184"/>
        <end position="195"/>
    </location>
</feature>
<feature type="strand" evidence="22">
    <location>
        <begin position="223"/>
        <end position="230"/>
    </location>
</feature>
<feature type="helix" evidence="22">
    <location>
        <begin position="238"/>
        <end position="240"/>
    </location>
</feature>
<feature type="strand" evidence="22">
    <location>
        <begin position="241"/>
        <end position="244"/>
    </location>
</feature>
<feature type="strand" evidence="22">
    <location>
        <begin position="248"/>
        <end position="251"/>
    </location>
</feature>
<feature type="helix" evidence="22">
    <location>
        <begin position="252"/>
        <end position="254"/>
    </location>
</feature>
<feature type="strand" evidence="23">
    <location>
        <begin position="255"/>
        <end position="258"/>
    </location>
</feature>
<feature type="strand" evidence="22">
    <location>
        <begin position="262"/>
        <end position="265"/>
    </location>
</feature>
<feature type="helix" evidence="22">
    <location>
        <begin position="280"/>
        <end position="282"/>
    </location>
</feature>
<feature type="helix" evidence="22">
    <location>
        <begin position="285"/>
        <end position="288"/>
    </location>
</feature>
<feature type="strand" evidence="22">
    <location>
        <begin position="290"/>
        <end position="293"/>
    </location>
</feature>
<feature type="helix" evidence="22">
    <location>
        <begin position="298"/>
        <end position="301"/>
    </location>
</feature>
<feature type="strand" evidence="22">
    <location>
        <begin position="306"/>
        <end position="313"/>
    </location>
</feature>
<feature type="strand" evidence="22">
    <location>
        <begin position="316"/>
        <end position="324"/>
    </location>
</feature>
<feature type="strand" evidence="22">
    <location>
        <begin position="339"/>
        <end position="343"/>
    </location>
</feature>
<feature type="strand" evidence="22">
    <location>
        <begin position="346"/>
        <end position="352"/>
    </location>
</feature>
<feature type="helix" evidence="22">
    <location>
        <begin position="354"/>
        <end position="358"/>
    </location>
</feature>
<feature type="strand" evidence="22">
    <location>
        <begin position="365"/>
        <end position="371"/>
    </location>
</feature>
<feature type="strand" evidence="22">
    <location>
        <begin position="377"/>
        <end position="388"/>
    </location>
</feature>
<feature type="strand" evidence="22">
    <location>
        <begin position="403"/>
        <end position="409"/>
    </location>
</feature>
<feature type="strand" evidence="23">
    <location>
        <begin position="412"/>
        <end position="414"/>
    </location>
</feature>
<feature type="helix" evidence="25">
    <location>
        <begin position="526"/>
        <end position="533"/>
    </location>
</feature>
<feature type="turn" evidence="25">
    <location>
        <begin position="534"/>
        <end position="536"/>
    </location>
</feature>
<feature type="helix" evidence="25">
    <location>
        <begin position="538"/>
        <end position="540"/>
    </location>
</feature>
<feature type="strand" evidence="25">
    <location>
        <begin position="541"/>
        <end position="544"/>
    </location>
</feature>
<feature type="strand" evidence="25">
    <location>
        <begin position="549"/>
        <end position="555"/>
    </location>
</feature>
<feature type="turn" evidence="25">
    <location>
        <begin position="556"/>
        <end position="559"/>
    </location>
</feature>
<feature type="strand" evidence="25">
    <location>
        <begin position="560"/>
        <end position="567"/>
    </location>
</feature>
<feature type="helix" evidence="25">
    <location>
        <begin position="572"/>
        <end position="585"/>
    </location>
</feature>
<feature type="strand" evidence="25">
    <location>
        <begin position="596"/>
        <end position="600"/>
    </location>
</feature>
<feature type="helix" evidence="25">
    <location>
        <begin position="602"/>
        <end position="604"/>
    </location>
</feature>
<feature type="strand" evidence="25">
    <location>
        <begin position="606"/>
        <end position="611"/>
    </location>
</feature>
<feature type="helix" evidence="25">
    <location>
        <begin position="619"/>
        <end position="621"/>
    </location>
</feature>
<feature type="strand" evidence="25">
    <location>
        <begin position="623"/>
        <end position="627"/>
    </location>
</feature>
<feature type="helix" evidence="25">
    <location>
        <begin position="632"/>
        <end position="651"/>
    </location>
</feature>
<feature type="strand" evidence="25">
    <location>
        <begin position="653"/>
        <end position="655"/>
    </location>
</feature>
<feature type="strand" evidence="25">
    <location>
        <begin position="666"/>
        <end position="669"/>
    </location>
</feature>
<feature type="strand" evidence="25">
    <location>
        <begin position="675"/>
        <end position="677"/>
    </location>
</feature>
<feature type="helix" evidence="25">
    <location>
        <begin position="680"/>
        <end position="682"/>
    </location>
</feature>
<feature type="strand" evidence="24">
    <location>
        <begin position="684"/>
        <end position="686"/>
    </location>
</feature>
<feature type="helix" evidence="25">
    <location>
        <begin position="702"/>
        <end position="704"/>
    </location>
</feature>
<feature type="helix" evidence="25">
    <location>
        <begin position="709"/>
        <end position="712"/>
    </location>
</feature>
<feature type="helix" evidence="25">
    <location>
        <begin position="717"/>
        <end position="733"/>
    </location>
</feature>
<feature type="helix" evidence="25">
    <location>
        <begin position="744"/>
        <end position="746"/>
    </location>
</feature>
<feature type="helix" evidence="25">
    <location>
        <begin position="749"/>
        <end position="758"/>
    </location>
</feature>
<feature type="helix" evidence="25">
    <location>
        <begin position="762"/>
        <end position="764"/>
    </location>
</feature>
<feature type="helix" evidence="25">
    <location>
        <begin position="768"/>
        <end position="770"/>
    </location>
</feature>
<feature type="turn" evidence="25">
    <location>
        <begin position="771"/>
        <end position="773"/>
    </location>
</feature>
<feature type="helix" evidence="25">
    <location>
        <begin position="776"/>
        <end position="789"/>
    </location>
</feature>
<feature type="helix" evidence="25">
    <location>
        <begin position="794"/>
        <end position="796"/>
    </location>
</feature>
<feature type="helix" evidence="25">
    <location>
        <begin position="800"/>
        <end position="814"/>
    </location>
</feature>
<protein>
    <recommendedName>
        <fullName evidence="16">Receptor-like protein kinase FERONIA</fullName>
        <ecNumber>2.7.11.1</ecNumber>
    </recommendedName>
    <alternativeName>
        <fullName evidence="15">Protein SIRENE</fullName>
    </alternativeName>
</protein>
<sequence length="895" mass="98150">MKITEGRFRLSLLLLLLLISAATLISAADYSPTEKILLNCGGGASNLTDTDNRIWISDVKSKFLSSSSEDSKTSPALTQDPSVPEVPYMTARVFRSPFTYTFPVASGRKFVRLYFYPNSYDGLNATNSLFSVSFGPYTLLKNFSASQTAEALTYAFIIKEFVVNVEGGTLNMTFTPESAPSNAYAFVNGIEVTSMPDMYSSTDGTLTMVGSSGSVTIDNSTALENVYRLNVGGNDISPSADTGLYRSWYDDQPYIFGAGLGIPETADPNMTIKYPTGTPTYVAPVDVYSTARSMGPTAQINLNYNLTWIFSIDSGFTYLVRLHFCEVSSNITKINQRVFTIYLNNQTAEPEADVIAWTSSNGVPFHKDYVVNPPEGNGQQDLWLALHPNPVNKPEYYDSLLNGVEIFKMNTSDGNLAGTNPIPGPQVTADPSKVLRPTTRKSKSNTAIIAGAASGAVVLALIIGFCVFGAYRRRKRGDYQPASDATSGWLPLSLYGNSHSAGSAKTNTTGSYASSLPSNLCRHFSFAEIKAATKNFDESRVLGVGGFGKVYRGEIDGGTTKVAIKRGNPMSEQGVHEFQTEIEMLSKLRHRHLVSLIGYCEENCEMILVYDYMAHGTMREHLYKTQNPSLPWKQRLEICIGAARGLHYLHTGAKHTIIHRDVKTTNILLDEKWVAKVSDFGLSKTGPTLDHTHVSTVVKGSFGYLDPEYFRRQQLTEKSDVYSFGVVLFEALCARPALNPTLAKEQVSLAEWAPYCYKKGMLDQIVDPYLKGKITPECFKKFAETAMKCVLDQGIERPSMGDVLWNLEFALQLQESAEENGKGVCGDMDMDEIKYDDGNCKGKNDKSSDVYEGNVTDSRSSGIDMSIGGRSLASEDSDGLTPSAVFSQIMNPKGR</sequence>
<dbReference type="EC" id="2.7.11.1"/>
<dbReference type="EMBL" id="EF681137">
    <property type="protein sequence ID" value="ABT18100.1"/>
    <property type="molecule type" value="Genomic_DNA"/>
</dbReference>
<dbReference type="EMBL" id="AL133452">
    <property type="protein sequence ID" value="CAB63019.1"/>
    <property type="molecule type" value="Genomic_DNA"/>
</dbReference>
<dbReference type="EMBL" id="CP002686">
    <property type="protein sequence ID" value="AEE78805.1"/>
    <property type="molecule type" value="Genomic_DNA"/>
</dbReference>
<dbReference type="EMBL" id="AY035053">
    <property type="protein sequence ID" value="AAK59558.1"/>
    <property type="molecule type" value="mRNA"/>
</dbReference>
<dbReference type="EMBL" id="AJ242671">
    <property type="protein sequence ID" value="CAB92960.1"/>
    <property type="status" value="ALT_SEQ"/>
    <property type="molecule type" value="mRNA"/>
</dbReference>
<dbReference type="EMBL" id="AK230000">
    <property type="protein sequence ID" value="BAF01824.1"/>
    <property type="molecule type" value="mRNA"/>
</dbReference>
<dbReference type="PIR" id="T45786">
    <property type="entry name" value="T45786"/>
</dbReference>
<dbReference type="RefSeq" id="NP_190723.1">
    <property type="nucleotide sequence ID" value="NM_115014.5"/>
</dbReference>
<dbReference type="PDB" id="6A5B">
    <property type="method" value="X-ray"/>
    <property type="resolution" value="2.21 A"/>
    <property type="chains" value="A=21-450"/>
</dbReference>
<dbReference type="PDB" id="6A5E">
    <property type="method" value="X-ray"/>
    <property type="resolution" value="2.77 A"/>
    <property type="chains" value="A/B=28-423"/>
</dbReference>
<dbReference type="PDB" id="7XDV">
    <property type="method" value="X-ray"/>
    <property type="resolution" value="1.97 A"/>
    <property type="chains" value="A/B=518-816"/>
</dbReference>
<dbReference type="PDB" id="7XDW">
    <property type="method" value="X-ray"/>
    <property type="resolution" value="1.93 A"/>
    <property type="chains" value="A/B=518-816"/>
</dbReference>
<dbReference type="PDB" id="7XDX">
    <property type="method" value="X-ray"/>
    <property type="resolution" value="2.23 A"/>
    <property type="chains" value="A/B=518-816"/>
</dbReference>
<dbReference type="PDB" id="7XDY">
    <property type="method" value="X-ray"/>
    <property type="resolution" value="2.28 A"/>
    <property type="chains" value="A/B=518-816"/>
</dbReference>
<dbReference type="PDBsum" id="6A5B"/>
<dbReference type="PDBsum" id="6A5E"/>
<dbReference type="PDBsum" id="7XDV"/>
<dbReference type="PDBsum" id="7XDW"/>
<dbReference type="PDBsum" id="7XDX"/>
<dbReference type="PDBsum" id="7XDY"/>
<dbReference type="SMR" id="Q9SCZ4"/>
<dbReference type="BioGRID" id="9636">
    <property type="interactions" value="12"/>
</dbReference>
<dbReference type="DIP" id="DIP-59394N"/>
<dbReference type="FunCoup" id="Q9SCZ4">
    <property type="interactions" value="1444"/>
</dbReference>
<dbReference type="IntAct" id="Q9SCZ4">
    <property type="interactions" value="9"/>
</dbReference>
<dbReference type="STRING" id="3702.Q9SCZ4"/>
<dbReference type="TCDB" id="1.A.130.1.1">
    <property type="family name" value="the mildew-resistance locus o (mlo) family"/>
</dbReference>
<dbReference type="GlyCosmos" id="Q9SCZ4">
    <property type="glycosylation" value="10 sites, No reported glycans"/>
</dbReference>
<dbReference type="GlyGen" id="Q9SCZ4">
    <property type="glycosylation" value="10 sites"/>
</dbReference>
<dbReference type="iPTMnet" id="Q9SCZ4"/>
<dbReference type="SwissPalm" id="Q9SCZ4"/>
<dbReference type="PaxDb" id="3702-AT3G51550.1"/>
<dbReference type="ProteomicsDB" id="230948"/>
<dbReference type="EnsemblPlants" id="AT3G51550.1">
    <property type="protein sequence ID" value="AT3G51550.1"/>
    <property type="gene ID" value="AT3G51550"/>
</dbReference>
<dbReference type="GeneID" id="824318"/>
<dbReference type="Gramene" id="AT3G51550.1">
    <property type="protein sequence ID" value="AT3G51550.1"/>
    <property type="gene ID" value="AT3G51550"/>
</dbReference>
<dbReference type="KEGG" id="ath:AT3G51550"/>
<dbReference type="Araport" id="AT3G51550"/>
<dbReference type="TAIR" id="AT3G51550">
    <property type="gene designation" value="FER"/>
</dbReference>
<dbReference type="eggNOG" id="KOG1187">
    <property type="taxonomic scope" value="Eukaryota"/>
</dbReference>
<dbReference type="HOGENOM" id="CLU_000288_42_5_1"/>
<dbReference type="InParanoid" id="Q9SCZ4"/>
<dbReference type="OMA" id="ECFRKFA"/>
<dbReference type="PhylomeDB" id="Q9SCZ4"/>
<dbReference type="PRO" id="PR:Q9SCZ4"/>
<dbReference type="Proteomes" id="UP000006548">
    <property type="component" value="Chromosome 3"/>
</dbReference>
<dbReference type="ExpressionAtlas" id="Q9SCZ4">
    <property type="expression patterns" value="baseline and differential"/>
</dbReference>
<dbReference type="GO" id="GO:0043680">
    <property type="term" value="C:filiform apparatus"/>
    <property type="evidence" value="ECO:0000314"/>
    <property type="project" value="TAIR"/>
</dbReference>
<dbReference type="GO" id="GO:0005886">
    <property type="term" value="C:plasma membrane"/>
    <property type="evidence" value="ECO:0000314"/>
    <property type="project" value="TAIR"/>
</dbReference>
<dbReference type="GO" id="GO:0009506">
    <property type="term" value="C:plasmodesma"/>
    <property type="evidence" value="ECO:0007005"/>
    <property type="project" value="TAIR"/>
</dbReference>
<dbReference type="GO" id="GO:0005524">
    <property type="term" value="F:ATP binding"/>
    <property type="evidence" value="ECO:0007669"/>
    <property type="project" value="UniProtKB-KW"/>
</dbReference>
<dbReference type="GO" id="GO:0004672">
    <property type="term" value="F:protein kinase activity"/>
    <property type="evidence" value="ECO:0000314"/>
    <property type="project" value="TAIR"/>
</dbReference>
<dbReference type="GO" id="GO:0106310">
    <property type="term" value="F:protein serine kinase activity"/>
    <property type="evidence" value="ECO:0007669"/>
    <property type="project" value="RHEA"/>
</dbReference>
<dbReference type="GO" id="GO:0004674">
    <property type="term" value="F:protein serine/threonine kinase activity"/>
    <property type="evidence" value="ECO:0007669"/>
    <property type="project" value="UniProtKB-KW"/>
</dbReference>
<dbReference type="GO" id="GO:0004714">
    <property type="term" value="F:transmembrane receptor protein tyrosine kinase activity"/>
    <property type="evidence" value="ECO:0007669"/>
    <property type="project" value="InterPro"/>
</dbReference>
<dbReference type="GO" id="GO:0009738">
    <property type="term" value="P:abscisic acid-activated signaling pathway"/>
    <property type="evidence" value="ECO:0007669"/>
    <property type="project" value="UniProtKB-KW"/>
</dbReference>
<dbReference type="GO" id="GO:0009742">
    <property type="term" value="P:brassinosteroid mediated signaling pathway"/>
    <property type="evidence" value="ECO:0007669"/>
    <property type="project" value="UniProtKB-KW"/>
</dbReference>
<dbReference type="GO" id="GO:0032922">
    <property type="term" value="P:circadian regulation of gene expression"/>
    <property type="evidence" value="ECO:0000270"/>
    <property type="project" value="TAIR"/>
</dbReference>
<dbReference type="GO" id="GO:0050832">
    <property type="term" value="P:defense response to fungus"/>
    <property type="evidence" value="ECO:0000315"/>
    <property type="project" value="TAIR"/>
</dbReference>
<dbReference type="GO" id="GO:0009873">
    <property type="term" value="P:ethylene-activated signaling pathway"/>
    <property type="evidence" value="ECO:0007669"/>
    <property type="project" value="UniProtKB-KW"/>
</dbReference>
<dbReference type="GO" id="GO:0009788">
    <property type="term" value="P:negative regulation of abscisic acid-activated signaling pathway"/>
    <property type="evidence" value="ECO:0000315"/>
    <property type="project" value="UniProtKB"/>
</dbReference>
<dbReference type="GO" id="GO:0030308">
    <property type="term" value="P:negative regulation of cell growth"/>
    <property type="evidence" value="ECO:0000315"/>
    <property type="project" value="UniProtKB"/>
</dbReference>
<dbReference type="GO" id="GO:0010483">
    <property type="term" value="P:pollen tube reception"/>
    <property type="evidence" value="ECO:0000315"/>
    <property type="project" value="TAIR"/>
</dbReference>
<dbReference type="GO" id="GO:0009791">
    <property type="term" value="P:post-embryonic development"/>
    <property type="evidence" value="ECO:0000315"/>
    <property type="project" value="TAIR"/>
</dbReference>
<dbReference type="GO" id="GO:0046777">
    <property type="term" value="P:protein autophosphorylation"/>
    <property type="evidence" value="ECO:0000314"/>
    <property type="project" value="TAIR"/>
</dbReference>
<dbReference type="GO" id="GO:0009741">
    <property type="term" value="P:response to brassinosteroid"/>
    <property type="evidence" value="ECO:0000315"/>
    <property type="project" value="UniProtKB"/>
</dbReference>
<dbReference type="GO" id="GO:0009723">
    <property type="term" value="P:response to ethylene"/>
    <property type="evidence" value="ECO:0000315"/>
    <property type="project" value="UniProtKB"/>
</dbReference>
<dbReference type="GO" id="GO:0048364">
    <property type="term" value="P:root development"/>
    <property type="evidence" value="ECO:0000315"/>
    <property type="project" value="UniProtKB"/>
</dbReference>
<dbReference type="GO" id="GO:0010118">
    <property type="term" value="P:stomatal movement"/>
    <property type="evidence" value="ECO:0000316"/>
    <property type="project" value="TAIR"/>
</dbReference>
<dbReference type="CDD" id="cd14066">
    <property type="entry name" value="STKc_IRAK"/>
    <property type="match status" value="1"/>
</dbReference>
<dbReference type="FunFam" id="2.60.120.430:FF:000003">
    <property type="entry name" value="FERONIA receptor-like kinase"/>
    <property type="match status" value="1"/>
</dbReference>
<dbReference type="FunFam" id="2.60.120.430:FF:000007">
    <property type="entry name" value="FERONIA receptor-like kinase"/>
    <property type="match status" value="1"/>
</dbReference>
<dbReference type="FunFam" id="1.10.510.10:FF:000058">
    <property type="entry name" value="Receptor-like protein kinase FERONIA"/>
    <property type="match status" value="1"/>
</dbReference>
<dbReference type="FunFam" id="3.30.200.20:FF:000039">
    <property type="entry name" value="receptor-like protein kinase FERONIA"/>
    <property type="match status" value="1"/>
</dbReference>
<dbReference type="Gene3D" id="2.60.120.430">
    <property type="entry name" value="Galactose-binding lectin"/>
    <property type="match status" value="2"/>
</dbReference>
<dbReference type="Gene3D" id="3.30.200.20">
    <property type="entry name" value="Phosphorylase Kinase, domain 1"/>
    <property type="match status" value="1"/>
</dbReference>
<dbReference type="Gene3D" id="1.10.510.10">
    <property type="entry name" value="Transferase(Phosphotransferase) domain 1"/>
    <property type="match status" value="1"/>
</dbReference>
<dbReference type="InterPro" id="IPR045272">
    <property type="entry name" value="ANXUR1/2-like"/>
</dbReference>
<dbReference type="InterPro" id="IPR011009">
    <property type="entry name" value="Kinase-like_dom_sf"/>
</dbReference>
<dbReference type="InterPro" id="IPR024788">
    <property type="entry name" value="Malectin-like_Carb-bd_dom"/>
</dbReference>
<dbReference type="InterPro" id="IPR000719">
    <property type="entry name" value="Prot_kinase_dom"/>
</dbReference>
<dbReference type="InterPro" id="IPR017441">
    <property type="entry name" value="Protein_kinase_ATP_BS"/>
</dbReference>
<dbReference type="InterPro" id="IPR001245">
    <property type="entry name" value="Ser-Thr/Tyr_kinase_cat_dom"/>
</dbReference>
<dbReference type="InterPro" id="IPR008271">
    <property type="entry name" value="Ser/Thr_kinase_AS"/>
</dbReference>
<dbReference type="PANTHER" id="PTHR34590">
    <property type="entry name" value="OS03G0124300 PROTEIN-RELATED"/>
    <property type="match status" value="1"/>
</dbReference>
<dbReference type="PANTHER" id="PTHR34590:SF5">
    <property type="entry name" value="OS04G0586500 PROTEIN"/>
    <property type="match status" value="1"/>
</dbReference>
<dbReference type="Pfam" id="PF12819">
    <property type="entry name" value="Malectin_like"/>
    <property type="match status" value="1"/>
</dbReference>
<dbReference type="Pfam" id="PF07714">
    <property type="entry name" value="PK_Tyr_Ser-Thr"/>
    <property type="match status" value="1"/>
</dbReference>
<dbReference type="SMART" id="SM00220">
    <property type="entry name" value="S_TKc"/>
    <property type="match status" value="1"/>
</dbReference>
<dbReference type="SUPFAM" id="SSF56112">
    <property type="entry name" value="Protein kinase-like (PK-like)"/>
    <property type="match status" value="1"/>
</dbReference>
<dbReference type="PROSITE" id="PS00107">
    <property type="entry name" value="PROTEIN_KINASE_ATP"/>
    <property type="match status" value="1"/>
</dbReference>
<dbReference type="PROSITE" id="PS50011">
    <property type="entry name" value="PROTEIN_KINASE_DOM"/>
    <property type="match status" value="1"/>
</dbReference>
<dbReference type="PROSITE" id="PS00108">
    <property type="entry name" value="PROTEIN_KINASE_ST"/>
    <property type="match status" value="1"/>
</dbReference>
<organism>
    <name type="scientific">Arabidopsis thaliana</name>
    <name type="common">Mouse-ear cress</name>
    <dbReference type="NCBI Taxonomy" id="3702"/>
    <lineage>
        <taxon>Eukaryota</taxon>
        <taxon>Viridiplantae</taxon>
        <taxon>Streptophyta</taxon>
        <taxon>Embryophyta</taxon>
        <taxon>Tracheophyta</taxon>
        <taxon>Spermatophyta</taxon>
        <taxon>Magnoliopsida</taxon>
        <taxon>eudicotyledons</taxon>
        <taxon>Gunneridae</taxon>
        <taxon>Pentapetalae</taxon>
        <taxon>rosids</taxon>
        <taxon>malvids</taxon>
        <taxon>Brassicales</taxon>
        <taxon>Brassicaceae</taxon>
        <taxon>Camelineae</taxon>
        <taxon>Arabidopsis</taxon>
    </lineage>
</organism>
<reference key="1">
    <citation type="journal article" date="2007" name="Science">
        <title>The FERONIA receptor-like kinase mediates male-female interactions during pollen tube reception.</title>
        <authorList>
            <person name="Escobar-Restrepo J.-M."/>
            <person name="Huck N."/>
            <person name="Kessler S."/>
            <person name="Gagliardini V."/>
            <person name="Gheyselinck J."/>
            <person name="Yang W.-C."/>
            <person name="Grossniklaus U."/>
        </authorList>
    </citation>
    <scope>NUCLEOTIDE SEQUENCE [GENOMIC DNA]</scope>
    <scope>FUNCTION</scope>
    <scope>MUTAGENESIS OF LYS-565</scope>
    <scope>AUTOPHOSPHORYLATION</scope>
    <scope>TISSUE SPECIFICITY</scope>
    <scope>DEVELOPMENTAL STAGE</scope>
    <scope>SUBCELLULAR LOCATION</scope>
    <source>
        <strain>cv. Landsberg erecta</strain>
    </source>
</reference>
<reference key="2">
    <citation type="journal article" date="2000" name="Nature">
        <title>Sequence and analysis of chromosome 3 of the plant Arabidopsis thaliana.</title>
        <authorList>
            <person name="Salanoubat M."/>
            <person name="Lemcke K."/>
            <person name="Rieger M."/>
            <person name="Ansorge W."/>
            <person name="Unseld M."/>
            <person name="Fartmann B."/>
            <person name="Valle G."/>
            <person name="Bloecker H."/>
            <person name="Perez-Alonso M."/>
            <person name="Obermaier B."/>
            <person name="Delseny M."/>
            <person name="Boutry M."/>
            <person name="Grivell L.A."/>
            <person name="Mache R."/>
            <person name="Puigdomenech P."/>
            <person name="De Simone V."/>
            <person name="Choisne N."/>
            <person name="Artiguenave F."/>
            <person name="Robert C."/>
            <person name="Brottier P."/>
            <person name="Wincker P."/>
            <person name="Cattolico L."/>
            <person name="Weissenbach J."/>
            <person name="Saurin W."/>
            <person name="Quetier F."/>
            <person name="Schaefer M."/>
            <person name="Mueller-Auer S."/>
            <person name="Gabel C."/>
            <person name="Fuchs M."/>
            <person name="Benes V."/>
            <person name="Wurmbach E."/>
            <person name="Drzonek H."/>
            <person name="Erfle H."/>
            <person name="Jordan N."/>
            <person name="Bangert S."/>
            <person name="Wiedelmann R."/>
            <person name="Kranz H."/>
            <person name="Voss H."/>
            <person name="Holland R."/>
            <person name="Brandt P."/>
            <person name="Nyakatura G."/>
            <person name="Vezzi A."/>
            <person name="D'Angelo M."/>
            <person name="Pallavicini A."/>
            <person name="Toppo S."/>
            <person name="Simionati B."/>
            <person name="Conrad A."/>
            <person name="Hornischer K."/>
            <person name="Kauer G."/>
            <person name="Loehnert T.-H."/>
            <person name="Nordsiek G."/>
            <person name="Reichelt J."/>
            <person name="Scharfe M."/>
            <person name="Schoen O."/>
            <person name="Bargues M."/>
            <person name="Terol J."/>
            <person name="Climent J."/>
            <person name="Navarro P."/>
            <person name="Collado C."/>
            <person name="Perez-Perez A."/>
            <person name="Ottenwaelder B."/>
            <person name="Duchemin D."/>
            <person name="Cooke R."/>
            <person name="Laudie M."/>
            <person name="Berger-Llauro C."/>
            <person name="Purnelle B."/>
            <person name="Masuy D."/>
            <person name="de Haan M."/>
            <person name="Maarse A.C."/>
            <person name="Alcaraz J.-P."/>
            <person name="Cottet A."/>
            <person name="Casacuberta E."/>
            <person name="Monfort A."/>
            <person name="Argiriou A."/>
            <person name="Flores M."/>
            <person name="Liguori R."/>
            <person name="Vitale D."/>
            <person name="Mannhaupt G."/>
            <person name="Haase D."/>
            <person name="Schoof H."/>
            <person name="Rudd S."/>
            <person name="Zaccaria P."/>
            <person name="Mewes H.-W."/>
            <person name="Mayer K.F.X."/>
            <person name="Kaul S."/>
            <person name="Town C.D."/>
            <person name="Koo H.L."/>
            <person name="Tallon L.J."/>
            <person name="Jenkins J."/>
            <person name="Rooney T."/>
            <person name="Rizzo M."/>
            <person name="Walts A."/>
            <person name="Utterback T."/>
            <person name="Fujii C.Y."/>
            <person name="Shea T.P."/>
            <person name="Creasy T.H."/>
            <person name="Haas B."/>
            <person name="Maiti R."/>
            <person name="Wu D."/>
            <person name="Peterson J."/>
            <person name="Van Aken S."/>
            <person name="Pai G."/>
            <person name="Militscher J."/>
            <person name="Sellers P."/>
            <person name="Gill J.E."/>
            <person name="Feldblyum T.V."/>
            <person name="Preuss D."/>
            <person name="Lin X."/>
            <person name="Nierman W.C."/>
            <person name="Salzberg S.L."/>
            <person name="White O."/>
            <person name="Venter J.C."/>
            <person name="Fraser C.M."/>
            <person name="Kaneko T."/>
            <person name="Nakamura Y."/>
            <person name="Sato S."/>
            <person name="Kato T."/>
            <person name="Asamizu E."/>
            <person name="Sasamoto S."/>
            <person name="Kimura T."/>
            <person name="Idesawa K."/>
            <person name="Kawashima K."/>
            <person name="Kishida Y."/>
            <person name="Kiyokawa C."/>
            <person name="Kohara M."/>
            <person name="Matsumoto M."/>
            <person name="Matsuno A."/>
            <person name="Muraki A."/>
            <person name="Nakayama S."/>
            <person name="Nakazaki N."/>
            <person name="Shinpo S."/>
            <person name="Takeuchi C."/>
            <person name="Wada T."/>
            <person name="Watanabe A."/>
            <person name="Yamada M."/>
            <person name="Yasuda M."/>
            <person name="Tabata S."/>
        </authorList>
    </citation>
    <scope>NUCLEOTIDE SEQUENCE [LARGE SCALE GENOMIC DNA]</scope>
    <source>
        <strain>cv. Columbia</strain>
    </source>
</reference>
<reference key="3">
    <citation type="journal article" date="2017" name="Plant J.">
        <title>Araport11: a complete reannotation of the Arabidopsis thaliana reference genome.</title>
        <authorList>
            <person name="Cheng C.Y."/>
            <person name="Krishnakumar V."/>
            <person name="Chan A.P."/>
            <person name="Thibaud-Nissen F."/>
            <person name="Schobel S."/>
            <person name="Town C.D."/>
        </authorList>
    </citation>
    <scope>GENOME REANNOTATION</scope>
    <source>
        <strain>cv. Columbia</strain>
    </source>
</reference>
<reference key="4">
    <citation type="journal article" date="2003" name="Science">
        <title>Empirical analysis of transcriptional activity in the Arabidopsis genome.</title>
        <authorList>
            <person name="Yamada K."/>
            <person name="Lim J."/>
            <person name="Dale J.M."/>
            <person name="Chen H."/>
            <person name="Shinn P."/>
            <person name="Palm C.J."/>
            <person name="Southwick A.M."/>
            <person name="Wu H.C."/>
            <person name="Kim C.J."/>
            <person name="Nguyen M."/>
            <person name="Pham P.K."/>
            <person name="Cheuk R.F."/>
            <person name="Karlin-Newmann G."/>
            <person name="Liu S.X."/>
            <person name="Lam B."/>
            <person name="Sakano H."/>
            <person name="Wu T."/>
            <person name="Yu G."/>
            <person name="Miranda M."/>
            <person name="Quach H.L."/>
            <person name="Tripp M."/>
            <person name="Chang C.H."/>
            <person name="Lee J.M."/>
            <person name="Toriumi M.J."/>
            <person name="Chan M.M."/>
            <person name="Tang C.C."/>
            <person name="Onodera C.S."/>
            <person name="Deng J.M."/>
            <person name="Akiyama K."/>
            <person name="Ansari Y."/>
            <person name="Arakawa T."/>
            <person name="Banh J."/>
            <person name="Banno F."/>
            <person name="Bowser L."/>
            <person name="Brooks S.Y."/>
            <person name="Carninci P."/>
            <person name="Chao Q."/>
            <person name="Choy N."/>
            <person name="Enju A."/>
            <person name="Goldsmith A.D."/>
            <person name="Gurjal M."/>
            <person name="Hansen N.F."/>
            <person name="Hayashizaki Y."/>
            <person name="Johnson-Hopson C."/>
            <person name="Hsuan V.W."/>
            <person name="Iida K."/>
            <person name="Karnes M."/>
            <person name="Khan S."/>
            <person name="Koesema E."/>
            <person name="Ishida J."/>
            <person name="Jiang P.X."/>
            <person name="Jones T."/>
            <person name="Kawai J."/>
            <person name="Kamiya A."/>
            <person name="Meyers C."/>
            <person name="Nakajima M."/>
            <person name="Narusaka M."/>
            <person name="Seki M."/>
            <person name="Sakurai T."/>
            <person name="Satou M."/>
            <person name="Tamse R."/>
            <person name="Vaysberg M."/>
            <person name="Wallender E.K."/>
            <person name="Wong C."/>
            <person name="Yamamura Y."/>
            <person name="Yuan S."/>
            <person name="Shinozaki K."/>
            <person name="Davis R.W."/>
            <person name="Theologis A."/>
            <person name="Ecker J.R."/>
        </authorList>
    </citation>
    <scope>NUCLEOTIDE SEQUENCE [LARGE SCALE MRNA]</scope>
    <source>
        <strain>cv. Columbia</strain>
    </source>
</reference>
<reference key="5">
    <citation type="submission" date="1999-05" db="EMBL/GenBank/DDBJ databases">
        <authorList>
            <person name="Desbrosses-Fonrouge A.G."/>
        </authorList>
    </citation>
    <scope>NUCLEOTIDE SEQUENCE [MRNA] OF 427-895</scope>
</reference>
<reference key="6">
    <citation type="submission" date="2006-07" db="EMBL/GenBank/DDBJ databases">
        <title>Large-scale analysis of RIKEN Arabidopsis full-length (RAFL) cDNAs.</title>
        <authorList>
            <person name="Totoki Y."/>
            <person name="Seki M."/>
            <person name="Ishida J."/>
            <person name="Nakajima M."/>
            <person name="Enju A."/>
            <person name="Kamiya A."/>
            <person name="Narusaka M."/>
            <person name="Shin-i T."/>
            <person name="Nakagawa M."/>
            <person name="Sakamoto N."/>
            <person name="Oishi K."/>
            <person name="Kohara Y."/>
            <person name="Kobayashi M."/>
            <person name="Toyoda A."/>
            <person name="Sakaki Y."/>
            <person name="Sakurai T."/>
            <person name="Iida K."/>
            <person name="Akiyama K."/>
            <person name="Satou M."/>
            <person name="Toyoda T."/>
            <person name="Konagaya A."/>
            <person name="Carninci P."/>
            <person name="Kawai J."/>
            <person name="Hayashizaki Y."/>
            <person name="Shinozaki K."/>
        </authorList>
    </citation>
    <scope>NUCLEOTIDE SEQUENCE [LARGE SCALE MRNA] OF 714-895</scope>
    <source>
        <strain>cv. Columbia</strain>
    </source>
</reference>
<reference key="7">
    <citation type="journal article" date="2003" name="Curr. Biol.">
        <title>Female control of male gamete delivery during fertilization in Arabidopsis thaliana.</title>
        <authorList>
            <person name="Rotman N."/>
            <person name="Rozier F."/>
            <person name="Boavida L."/>
            <person name="Dumas C."/>
            <person name="Berger F."/>
            <person name="Faure J.-E."/>
        </authorList>
    </citation>
    <scope>DISRUPTION PHENOTYPE</scope>
</reference>
<reference key="8">
    <citation type="journal article" date="2003" name="Development">
        <title>The Arabidopsis mutant feronia disrupts the female gametophytic control of pollen tube reception.</title>
        <authorList>
            <person name="Huck N."/>
            <person name="Moore J.M."/>
            <person name="Federer M."/>
            <person name="Grossniklaus U."/>
        </authorList>
    </citation>
    <scope>IDENTIFICATION</scope>
</reference>
<reference key="9">
    <citation type="journal article" date="2003" name="Mol. Cell. Proteomics">
        <title>Large-scale analysis of in vivo phosphorylated membrane proteins by immobilized metal ion affinity chromatography and mass spectrometry.</title>
        <authorList>
            <person name="Nuehse T.S."/>
            <person name="Stensballe A."/>
            <person name="Jensen O.N."/>
            <person name="Peck S.C."/>
        </authorList>
    </citation>
    <scope>PHOSPHORYLATION [LARGE SCALE ANALYSIS] AT SER-866</scope>
    <scope>IDENTIFICATION BY MASS SPECTROMETRY [LARGE SCALE ANALYSIS]</scope>
    <source>
        <strain>cv. La-0</strain>
    </source>
</reference>
<reference key="10">
    <citation type="journal article" date="2004" name="Plant Cell">
        <title>Phosphoproteomics of the Arabidopsis plasma membrane and a new phosphorylation site database.</title>
        <authorList>
            <person name="Nuehse T.S."/>
            <person name="Stensballe A."/>
            <person name="Jensen O.N."/>
            <person name="Peck S.C."/>
        </authorList>
    </citation>
    <scope>IDENTIFICATION BY MASS SPECTROMETRY [LARGE SCALE ANALYSIS]</scope>
</reference>
<reference key="11">
    <citation type="journal article" date="2007" name="Mol. Cell. Proteomics">
        <title>A high content in lipid-modified peripheral proteins and integral receptor kinases features in the arabidopsis plasma membrane proteome.</title>
        <authorList>
            <person name="Marmagne A."/>
            <person name="Ferro M."/>
            <person name="Meinnel T."/>
            <person name="Bruley C."/>
            <person name="Kuhn L."/>
            <person name="Garin J."/>
            <person name="Barbier-Brygoo H."/>
            <person name="Ephritikhine G."/>
        </authorList>
    </citation>
    <scope>IDENTIFICATION BY MASS SPECTROMETRY</scope>
    <scope>SUBCELLULAR LOCATION [LARGE SCALE ANALYSIS]</scope>
</reference>
<reference key="12">
    <citation type="journal article" date="2009" name="Mol. Plant">
        <title>Diverse transcriptional programs associated with environmental stress and hormones in the Arabidopsis receptor-like kinase gene family.</title>
        <authorList>
            <person name="Chae L."/>
            <person name="Sudat S."/>
            <person name="Dudoit S."/>
            <person name="Zhu T."/>
            <person name="Luan S."/>
        </authorList>
    </citation>
    <scope>GENE FAMILY</scope>
</reference>
<reference key="13">
    <citation type="journal article" date="2009" name="Proc. Natl. Acad. Sci. U.S.A.">
        <title>Three related receptor-like kinases are required for optimal cell elongation in Arabidopsis thaliana.</title>
        <authorList>
            <person name="Guo H."/>
            <person name="Li L."/>
            <person name="Ye H."/>
            <person name="Yu X."/>
            <person name="Algreen A."/>
            <person name="Yin Y."/>
        </authorList>
    </citation>
    <scope>FUNCTION</scope>
    <scope>TISSUE SPECIFICITY</scope>
    <scope>INDUCTION BY BRASSINOSTEROIDS</scope>
</reference>
<reference key="14">
    <citation type="journal article" date="2010" name="Mol. Plant">
        <title>FERONIA is a key modulator of brassinosteroid and ethylene responsiveness in Arabidopsis hypocotyls.</title>
        <authorList>
            <person name="Deslauriers S.D."/>
            <person name="Larsen P.B."/>
        </authorList>
    </citation>
    <scope>FUNCTION</scope>
    <scope>DISRUPTION PHENOTYPE</scope>
    <source>
        <strain>cv. Columbia</strain>
    </source>
</reference>
<reference key="15">
    <citation type="journal article" date="2010" name="Proc. Natl. Acad. Sci. U.S.A.">
        <title>FERONIA receptor-like kinase regulates RHO GTPase signaling of root hair development.</title>
        <authorList>
            <person name="Duan Q."/>
            <person name="Kita D."/>
            <person name="Li C."/>
            <person name="Cheung A.Y."/>
            <person name="Wu H.M."/>
        </authorList>
    </citation>
    <scope>FUNCTION</scope>
    <scope>INTERACTION WITH ROPGEF1</scope>
</reference>
<reference key="16">
    <citation type="journal article" date="2010" name="Science">
        <title>Conserved molecular components for pollen tube reception and fungal invasion.</title>
        <authorList>
            <person name="Kessler S.A."/>
            <person name="Shimosato-Asano H."/>
            <person name="Keinath N.F."/>
            <person name="Wuest S.E."/>
            <person name="Ingram G."/>
            <person name="Panstruga R."/>
            <person name="Grossniklaus U."/>
        </authorList>
    </citation>
    <scope>FUNCTION IN POWDERY MILDEW INFECTION</scope>
    <scope>DISRUPTION PHENOTYPE</scope>
    <scope>SUBCELLULAR LOCATION</scope>
    <source>
        <strain>cv. Landsberg erecta</strain>
    </source>
</reference>
<reference key="17">
    <citation type="journal article" date="2011" name="Curr. Opin. Plant Biol.">
        <title>THESEUS 1, FERONIA and relatives: a family of cell wall-sensing receptor kinases?</title>
        <authorList>
            <person name="Cheung A.Y."/>
            <person name="Wu H.M."/>
        </authorList>
    </citation>
    <scope>REVIEW</scope>
</reference>
<reference key="18">
    <citation type="journal article" date="2011" name="Phytochemistry">
        <title>Autophosphorylation profiling of Arabidopsis protein kinases using the cell-free system.</title>
        <authorList>
            <person name="Nemoto K."/>
            <person name="Seto T."/>
            <person name="Takahashi H."/>
            <person name="Nozawa A."/>
            <person name="Seki M."/>
            <person name="Shinozaki K."/>
            <person name="Endo Y."/>
            <person name="Sawasaki T."/>
        </authorList>
    </citation>
    <scope>AUTOPHOSPHORYLATION [LARGE SCALE ANALYSIS]</scope>
</reference>
<reference key="19">
    <citation type="journal article" date="2012" name="Proc. Natl. Acad. Sci. U.S.A.">
        <title>FERONIA receptor kinase pathway suppresses abscisic acid signaling in Arabidopsis by activating ABI2 phosphatase.</title>
        <authorList>
            <person name="Yu F."/>
            <person name="Qian L."/>
            <person name="Nibau C."/>
            <person name="Duan Q."/>
            <person name="Kita D."/>
            <person name="Levasseur K."/>
            <person name="Li X."/>
            <person name="Lu C."/>
            <person name="Li H."/>
            <person name="Hou C."/>
            <person name="Li L."/>
            <person name="Buchanan B.B."/>
            <person name="Chen L."/>
            <person name="Cheung A.Y."/>
            <person name="Li D."/>
            <person name="Luan S."/>
        </authorList>
    </citation>
    <scope>FUNCTION</scope>
    <scope>DISRUPTION PHENOTYPE</scope>
</reference>
<reference key="20">
    <citation type="journal article" date="2014" name="Science">
        <title>A peptide hormone and its receptor protein kinase regulate plant cell expansion.</title>
        <authorList>
            <person name="Haruta M."/>
            <person name="Sabat G."/>
            <person name="Stecker K."/>
            <person name="Minkoff B.B."/>
            <person name="Sussman M.R."/>
        </authorList>
    </citation>
    <scope>FUNCTION</scope>
    <scope>DISRUPTION PHENOTYPE</scope>
    <scope>INTERACTION WITH RALF1</scope>
    <scope>IDENTIFICATION BY MASS SPECTROMETRY</scope>
    <scope>PHOSPHORYLATION AT SER-858; SER-871 AND SER-874</scope>
    <scope>SUBCELLULAR LOCATION</scope>
    <source>
        <strain>cv. Columbia</strain>
    </source>
</reference>
<reference key="21">
    <citation type="journal article" date="2015" name="Elife">
        <title>Glycosylphosphatidylinositol-anchored proteins as chaperones and co-receptors for FERONIA receptor kinase signaling in Arabidopsis.</title>
        <authorList>
            <person name="Li C."/>
            <person name="Yeh F.L."/>
            <person name="Cheung A.Y."/>
            <person name="Duan Q."/>
            <person name="Kita D."/>
            <person name="Liu M.C."/>
            <person name="Maman J."/>
            <person name="Luu E.J."/>
            <person name="Wu B.W."/>
            <person name="Gates L."/>
            <person name="Jalal M."/>
            <person name="Kwong A."/>
            <person name="Carpenter H."/>
            <person name="Wu H.M."/>
        </authorList>
    </citation>
    <scope>INTERACTION WITH LRE AND LLG1</scope>
</reference>
<reference key="22">
    <citation type="journal article" date="2016" name="Curr. Biol.">
        <title>Maternal ENODLs are required for pollen tube reception in Arabidopsis.</title>
        <authorList>
            <person name="Hou Y."/>
            <person name="Guo X."/>
            <person name="Cyprys P."/>
            <person name="Zhang Y."/>
            <person name="Bleckmann A."/>
            <person name="Cai L."/>
            <person name="Huang Q."/>
            <person name="Luo Y."/>
            <person name="Gu H."/>
            <person name="Dresselhaus T."/>
            <person name="Dong J."/>
            <person name="Qu L.-J."/>
        </authorList>
    </citation>
    <scope>INTERACTION WITH ENODL14</scope>
</reference>
<name>FERON_ARATH</name>
<comment type="function">
    <text evidence="6 7 8 9 10 11 12">Receptor-like protein kinase that mediates the female control of male gamete delivery during fertilization, including growth cessation of compatible pollen tubes ensuring a reproductive isolation barriers, by regulating MLO7 subcellular polarization upon pollen tube perception in the female gametophyte synergids. Required for cell elongation during vegetative growth, mostly in a brassinosteroids- (BR-) independent manner. Acts as an upstream regulator for the Rac/Rop-signaling pathway that controls ROS-mediated root hair development. Seems to regulate a cross-talk between brassinosteroids and ethylene signaling pathways during hypocotyl elongation. Negative regulator of brassinosteroid response in light-grown hypocotyls, but required for brassinosteroid response in etiolated seedlings. Mediates sensitivity to powdery mildew (e.g. Golovinomyces orontii). Positive regulator of auxin-promoted growth that represses the abscisic acid (ABA) signaling via the activation of ABI2 phosphatase. Required for RALF1-mediated extracellular alkalinization in a signaling pathway preventing cell expansion.</text>
</comment>
<comment type="catalytic activity">
    <reaction>
        <text>L-seryl-[protein] + ATP = O-phospho-L-seryl-[protein] + ADP + H(+)</text>
        <dbReference type="Rhea" id="RHEA:17989"/>
        <dbReference type="Rhea" id="RHEA-COMP:9863"/>
        <dbReference type="Rhea" id="RHEA-COMP:11604"/>
        <dbReference type="ChEBI" id="CHEBI:15378"/>
        <dbReference type="ChEBI" id="CHEBI:29999"/>
        <dbReference type="ChEBI" id="CHEBI:30616"/>
        <dbReference type="ChEBI" id="CHEBI:83421"/>
        <dbReference type="ChEBI" id="CHEBI:456216"/>
        <dbReference type="EC" id="2.7.11.1"/>
    </reaction>
</comment>
<comment type="catalytic activity">
    <reaction>
        <text>L-threonyl-[protein] + ATP = O-phospho-L-threonyl-[protein] + ADP + H(+)</text>
        <dbReference type="Rhea" id="RHEA:46608"/>
        <dbReference type="Rhea" id="RHEA-COMP:11060"/>
        <dbReference type="Rhea" id="RHEA-COMP:11605"/>
        <dbReference type="ChEBI" id="CHEBI:15378"/>
        <dbReference type="ChEBI" id="CHEBI:30013"/>
        <dbReference type="ChEBI" id="CHEBI:30616"/>
        <dbReference type="ChEBI" id="CHEBI:61977"/>
        <dbReference type="ChEBI" id="CHEBI:456216"/>
        <dbReference type="EC" id="2.7.11.1"/>
    </reaction>
</comment>
<comment type="subunit">
    <text evidence="9 12 13 14">Interacts with ROPGEF1 (PubMed:20876100). Interacts with RALF1; triggering phosphorylation status and subsequent activation (PubMed:24458638). Interacts with LRE and LLG1 (PubMed:26052747). Interacts, via its extracellular domain, with FERONIA at the synergid cell surface (PubMed:27524487).</text>
</comment>
<comment type="interaction">
    <interactant intactId="EBI-15880405">
        <id>Q9SCZ4</id>
    </interactant>
    <interactant intactId="EBI-1548187">
        <id>Q38919</id>
        <label>ARAC4</label>
    </interactant>
    <organismsDiffer>false</organismsDiffer>
    <experiments>2</experiments>
</comment>
<comment type="interaction">
    <interactant intactId="EBI-15880405">
        <id>Q9SCZ4</id>
    </interactant>
    <interactant intactId="EBI-17071988">
        <id>Q9FN92</id>
        <label>At5g59700</label>
    </interactant>
    <organismsDiffer>false</organismsDiffer>
    <experiments>3</experiments>
</comment>
<comment type="interaction">
    <interactant intactId="EBI-15880405">
        <id>Q9SCZ4</id>
    </interactant>
    <interactant intactId="EBI-22028097">
        <id>Q9LX66</id>
        <label>HERK1</label>
    </interactant>
    <organismsDiffer>false</organismsDiffer>
    <experiments>5</experiments>
</comment>
<comment type="interaction">
    <interactant intactId="EBI-15880405">
        <id>Q9SCZ4</id>
    </interactant>
    <interactant intactId="EBI-16091545">
        <id>Q9SRY3</id>
        <label>RALF1</label>
    </interactant>
    <organismsDiffer>false</organismsDiffer>
    <experiments>3</experiments>
</comment>
<comment type="interaction">
    <interactant intactId="EBI-15880405">
        <id>Q9SCZ4</id>
    </interactant>
    <interactant intactId="EBI-4425188">
        <id>Q93ZY2</id>
        <label>ROPGEF1</label>
    </interactant>
    <organismsDiffer>false</organismsDiffer>
    <experiments>4</experiments>
</comment>
<comment type="subcellular location">
    <subcellularLocation>
        <location evidence="6 10 12 18">Cell membrane</location>
        <topology evidence="6 10 12 18">Single-pass type I membrane protein</topology>
    </subcellularLocation>
    <text>Accumulates asymmetrically in the female gametophyte synergid membrane at the filiform apparatus.</text>
</comment>
<comment type="tissue specificity">
    <text evidence="6 7">Expressed in leaves, buds, flowers, siliques, young ovules primordia, and young anthers with immature pollen, but not detected in mature pollen. Highest expression in the synergid cells of the female gametophyte.</text>
</comment>
<comment type="developmental stage">
    <text evidence="6">Detected in floral apices, young ovule primordia, and young anthers with immature pollen, but not in older anthers with mature pollen. After fertilization, expressed in globular embryos.</text>
</comment>
<comment type="induction">
    <text evidence="7">By brassinosteroids (BR).</text>
</comment>
<comment type="PTM">
    <text>Autophosphorylated.</text>
</comment>
<comment type="PTM">
    <text evidence="12">Phosphorylated at Ser-858, Ser-871 and Ser-874 upon activation by RALF1.</text>
</comment>
<comment type="disruption phenotype">
    <text evidence="5 8 10 11 12">Embryonic lethality due to impaired fertilization. The pollen tube fails to arrest and continues to grow inside the female gametophyte. Disturbed MLO7 relocalization to the filiform apparatus upon pollen tube arrival at the micropyle. Severe cell elongation defect in RNAi mutants with decreased FER expression. In fer-2 seedlings, altered responsiveness to brassinosteroids but increased ethylene response during the regulation of hypocotyl elongation. Increased resistance to powdery mildew (e.g. Golovinomyces orontii). Abscisic acid- (ABA)- hypersensitive response. Longer roots. Insensitivity to RALF1-mediated root-growth inhibition but hypersensitive to cation lithium inhibition.</text>
</comment>
<comment type="miscellaneous">
    <text>Female paralog of ANXUR, a male factor expressed in pollen tube that controls release of the sperm cell.</text>
</comment>
<comment type="miscellaneous">
    <text>Named after the Etruscan goddess of fertility Feronia.</text>
</comment>
<comment type="miscellaneous">
    <text>'Sirene' means siren in French.</text>
</comment>
<comment type="similarity">
    <text evidence="2">Belongs to the protein kinase superfamily. Ser/Thr protein kinase family.</text>
</comment>
<comment type="sequence caution" evidence="17">
    <conflict type="miscellaneous discrepancy">
        <sequence resource="EMBL-CDS" id="CAB92960"/>
    </conflict>
    <text>Sequencing errors.</text>
</comment>
<gene>
    <name evidence="16" type="primary">FER</name>
    <name type="synonym">AAK1</name>
    <name evidence="15" type="synonym">SIR</name>
    <name evidence="15" type="synonym">SRN</name>
    <name evidence="19" type="ordered locus">At3g51550</name>
    <name evidence="20" type="ORF">F26O13.190</name>
</gene>
<proteinExistence type="evidence at protein level"/>
<keyword id="KW-0002">3D-structure</keyword>
<keyword id="KW-0938">Abscisic acid signaling pathway</keyword>
<keyword id="KW-0067">ATP-binding</keyword>
<keyword id="KW-1070">Brassinosteroid signaling pathway</keyword>
<keyword id="KW-1003">Cell membrane</keyword>
<keyword id="KW-0217">Developmental protein</keyword>
<keyword id="KW-0936">Ethylene signaling pathway</keyword>
<keyword id="KW-0278">Fertilization</keyword>
<keyword id="KW-0325">Glycoprotein</keyword>
<keyword id="KW-0418">Kinase</keyword>
<keyword id="KW-0472">Membrane</keyword>
<keyword id="KW-0547">Nucleotide-binding</keyword>
<keyword id="KW-0597">Phosphoprotein</keyword>
<keyword id="KW-0675">Receptor</keyword>
<keyword id="KW-1185">Reference proteome</keyword>
<keyword id="KW-0723">Serine/threonine-protein kinase</keyword>
<keyword id="KW-0732">Signal</keyword>
<keyword id="KW-0808">Transferase</keyword>
<keyword id="KW-0812">Transmembrane</keyword>
<keyword id="KW-1133">Transmembrane helix</keyword>